<feature type="chain" id="PRO_1000015429" description="Large-conductance mechanosensitive channel">
    <location>
        <begin position="1"/>
        <end position="136"/>
    </location>
</feature>
<feature type="transmembrane region" description="Helical" evidence="1">
    <location>
        <begin position="9"/>
        <end position="29"/>
    </location>
</feature>
<feature type="transmembrane region" description="Helical" evidence="1">
    <location>
        <begin position="79"/>
        <end position="99"/>
    </location>
</feature>
<reference key="1">
    <citation type="submission" date="2006-12" db="EMBL/GenBank/DDBJ databases">
        <title>Complete sequence of Shewanella sp. W3-18-1.</title>
        <authorList>
            <consortium name="US DOE Joint Genome Institute"/>
            <person name="Copeland A."/>
            <person name="Lucas S."/>
            <person name="Lapidus A."/>
            <person name="Barry K."/>
            <person name="Detter J.C."/>
            <person name="Glavina del Rio T."/>
            <person name="Hammon N."/>
            <person name="Israni S."/>
            <person name="Dalin E."/>
            <person name="Tice H."/>
            <person name="Pitluck S."/>
            <person name="Chain P."/>
            <person name="Malfatti S."/>
            <person name="Shin M."/>
            <person name="Vergez L."/>
            <person name="Schmutz J."/>
            <person name="Larimer F."/>
            <person name="Land M."/>
            <person name="Hauser L."/>
            <person name="Kyrpides N."/>
            <person name="Lykidis A."/>
            <person name="Tiedje J."/>
            <person name="Richardson P."/>
        </authorList>
    </citation>
    <scope>NUCLEOTIDE SEQUENCE [LARGE SCALE GENOMIC DNA]</scope>
    <source>
        <strain>W3-18-1</strain>
    </source>
</reference>
<name>MSCL_SHESW</name>
<dbReference type="EMBL" id="CP000503">
    <property type="protein sequence ID" value="ABM23453.1"/>
    <property type="molecule type" value="Genomic_DNA"/>
</dbReference>
<dbReference type="RefSeq" id="WP_011787984.1">
    <property type="nucleotide sequence ID" value="NC_008750.1"/>
</dbReference>
<dbReference type="SMR" id="A1RFK8"/>
<dbReference type="KEGG" id="shw:Sputw3181_0602"/>
<dbReference type="HOGENOM" id="CLU_095787_0_0_6"/>
<dbReference type="Proteomes" id="UP000002597">
    <property type="component" value="Chromosome"/>
</dbReference>
<dbReference type="GO" id="GO:0005886">
    <property type="term" value="C:plasma membrane"/>
    <property type="evidence" value="ECO:0007669"/>
    <property type="project" value="UniProtKB-SubCell"/>
</dbReference>
<dbReference type="GO" id="GO:0008381">
    <property type="term" value="F:mechanosensitive monoatomic ion channel activity"/>
    <property type="evidence" value="ECO:0007669"/>
    <property type="project" value="UniProtKB-UniRule"/>
</dbReference>
<dbReference type="FunFam" id="1.10.1200.120:FF:000001">
    <property type="entry name" value="Large-conductance mechanosensitive channel"/>
    <property type="match status" value="1"/>
</dbReference>
<dbReference type="Gene3D" id="1.10.1200.120">
    <property type="entry name" value="Large-conductance mechanosensitive channel, MscL, domain 1"/>
    <property type="match status" value="1"/>
</dbReference>
<dbReference type="HAMAP" id="MF_00115">
    <property type="entry name" value="MscL"/>
    <property type="match status" value="1"/>
</dbReference>
<dbReference type="InterPro" id="IPR019823">
    <property type="entry name" value="Mechanosensitive_channel_CS"/>
</dbReference>
<dbReference type="InterPro" id="IPR001185">
    <property type="entry name" value="MS_channel"/>
</dbReference>
<dbReference type="InterPro" id="IPR037673">
    <property type="entry name" value="MSC/AndL"/>
</dbReference>
<dbReference type="InterPro" id="IPR036019">
    <property type="entry name" value="MscL_channel"/>
</dbReference>
<dbReference type="NCBIfam" id="TIGR00220">
    <property type="entry name" value="mscL"/>
    <property type="match status" value="1"/>
</dbReference>
<dbReference type="NCBIfam" id="NF001843">
    <property type="entry name" value="PRK00567.1-4"/>
    <property type="match status" value="1"/>
</dbReference>
<dbReference type="PANTHER" id="PTHR30266:SF2">
    <property type="entry name" value="LARGE-CONDUCTANCE MECHANOSENSITIVE CHANNEL"/>
    <property type="match status" value="1"/>
</dbReference>
<dbReference type="PANTHER" id="PTHR30266">
    <property type="entry name" value="MECHANOSENSITIVE CHANNEL MSCL"/>
    <property type="match status" value="1"/>
</dbReference>
<dbReference type="Pfam" id="PF01741">
    <property type="entry name" value="MscL"/>
    <property type="match status" value="1"/>
</dbReference>
<dbReference type="PRINTS" id="PR01264">
    <property type="entry name" value="MECHCHANNEL"/>
</dbReference>
<dbReference type="SUPFAM" id="SSF81330">
    <property type="entry name" value="Gated mechanosensitive channel"/>
    <property type="match status" value="1"/>
</dbReference>
<dbReference type="PROSITE" id="PS01327">
    <property type="entry name" value="MSCL"/>
    <property type="match status" value="1"/>
</dbReference>
<gene>
    <name evidence="1" type="primary">mscL</name>
    <name type="ordered locus">Sputw3181_0602</name>
</gene>
<comment type="function">
    <text evidence="1">Channel that opens in response to stretch forces in the membrane lipid bilayer. May participate in the regulation of osmotic pressure changes within the cell.</text>
</comment>
<comment type="subunit">
    <text evidence="1">Homopentamer.</text>
</comment>
<comment type="subcellular location">
    <subcellularLocation>
        <location evidence="1">Cell inner membrane</location>
        <topology evidence="1">Multi-pass membrane protein</topology>
    </subcellularLocation>
</comment>
<comment type="similarity">
    <text evidence="1">Belongs to the MscL family.</text>
</comment>
<evidence type="ECO:0000255" key="1">
    <source>
        <dbReference type="HAMAP-Rule" id="MF_00115"/>
    </source>
</evidence>
<proteinExistence type="inferred from homology"/>
<organism>
    <name type="scientific">Shewanella sp. (strain W3-18-1)</name>
    <dbReference type="NCBI Taxonomy" id="351745"/>
    <lineage>
        <taxon>Bacteria</taxon>
        <taxon>Pseudomonadati</taxon>
        <taxon>Pseudomonadota</taxon>
        <taxon>Gammaproteobacteria</taxon>
        <taxon>Alteromonadales</taxon>
        <taxon>Shewanellaceae</taxon>
        <taxon>Shewanella</taxon>
    </lineage>
</organism>
<protein>
    <recommendedName>
        <fullName evidence="1">Large-conductance mechanosensitive channel</fullName>
    </recommendedName>
</protein>
<accession>A1RFK8</accession>
<keyword id="KW-0997">Cell inner membrane</keyword>
<keyword id="KW-1003">Cell membrane</keyword>
<keyword id="KW-0407">Ion channel</keyword>
<keyword id="KW-0406">Ion transport</keyword>
<keyword id="KW-0472">Membrane</keyword>
<keyword id="KW-0812">Transmembrane</keyword>
<keyword id="KW-1133">Transmembrane helix</keyword>
<keyword id="KW-0813">Transport</keyword>
<sequence>MSLIKEFKAFASRGNVIDMAVGIIIGAAFGKIVSSFVADVIMPPIGIILGGVNFSDLSIVLQAAQGDAPSVVIAYGKFIQTVIDFTIIAFAIFMGLKAINTLKRKEEEAPKAPPTPTKEEELLSEIRDLLKAQQEK</sequence>